<dbReference type="EC" id="3.2.1.14"/>
<dbReference type="EMBL" id="U02270">
    <property type="protein sequence ID" value="AAC04924.1"/>
    <property type="molecule type" value="mRNA"/>
</dbReference>
<dbReference type="EMBL" id="L49234">
    <property type="protein sequence ID" value="AAB53952.1"/>
    <property type="molecule type" value="Genomic_DNA"/>
</dbReference>
<dbReference type="PIR" id="A56596">
    <property type="entry name" value="A56596"/>
</dbReference>
<dbReference type="SMR" id="P36362"/>
<dbReference type="CAZy" id="CBM14">
    <property type="family name" value="Carbohydrate-Binding Module Family 14"/>
</dbReference>
<dbReference type="CAZy" id="GH18">
    <property type="family name" value="Glycoside Hydrolase Family 18"/>
</dbReference>
<dbReference type="OrthoDB" id="73875at2759"/>
<dbReference type="GO" id="GO:0005576">
    <property type="term" value="C:extracellular region"/>
    <property type="evidence" value="ECO:0007669"/>
    <property type="project" value="UniProtKB-SubCell"/>
</dbReference>
<dbReference type="GO" id="GO:0008061">
    <property type="term" value="F:chitin binding"/>
    <property type="evidence" value="ECO:0007669"/>
    <property type="project" value="UniProtKB-KW"/>
</dbReference>
<dbReference type="GO" id="GO:0008843">
    <property type="term" value="F:endochitinase activity"/>
    <property type="evidence" value="ECO:0007669"/>
    <property type="project" value="UniProtKB-EC"/>
</dbReference>
<dbReference type="GO" id="GO:0006032">
    <property type="term" value="P:chitin catabolic process"/>
    <property type="evidence" value="ECO:0007669"/>
    <property type="project" value="UniProtKB-KW"/>
</dbReference>
<dbReference type="GO" id="GO:0000272">
    <property type="term" value="P:polysaccharide catabolic process"/>
    <property type="evidence" value="ECO:0007669"/>
    <property type="project" value="UniProtKB-KW"/>
</dbReference>
<dbReference type="CDD" id="cd02872">
    <property type="entry name" value="GH18_chitolectin_chitotriosidase"/>
    <property type="match status" value="1"/>
</dbReference>
<dbReference type="FunFam" id="3.20.20.80:FF:000144">
    <property type="entry name" value="Chitinase"/>
    <property type="match status" value="1"/>
</dbReference>
<dbReference type="FunFam" id="3.10.50.10:FF:000004">
    <property type="entry name" value="Chitinase 5"/>
    <property type="match status" value="1"/>
</dbReference>
<dbReference type="Gene3D" id="3.10.50.10">
    <property type="match status" value="1"/>
</dbReference>
<dbReference type="Gene3D" id="2.170.140.10">
    <property type="entry name" value="Chitin binding domain"/>
    <property type="match status" value="1"/>
</dbReference>
<dbReference type="Gene3D" id="3.20.20.80">
    <property type="entry name" value="Glycosidases"/>
    <property type="match status" value="1"/>
</dbReference>
<dbReference type="InterPro" id="IPR002557">
    <property type="entry name" value="Chitin-bd_dom"/>
</dbReference>
<dbReference type="InterPro" id="IPR036508">
    <property type="entry name" value="Chitin-bd_dom_sf"/>
</dbReference>
<dbReference type="InterPro" id="IPR011583">
    <property type="entry name" value="Chitinase_II/V-like_cat"/>
</dbReference>
<dbReference type="InterPro" id="IPR029070">
    <property type="entry name" value="Chitinase_insertion_sf"/>
</dbReference>
<dbReference type="InterPro" id="IPR001223">
    <property type="entry name" value="Glyco_hydro18_cat"/>
</dbReference>
<dbReference type="InterPro" id="IPR001579">
    <property type="entry name" value="Glyco_hydro_18_chit_AS"/>
</dbReference>
<dbReference type="InterPro" id="IPR017853">
    <property type="entry name" value="Glycoside_hydrolase_SF"/>
</dbReference>
<dbReference type="InterPro" id="IPR050314">
    <property type="entry name" value="Glycosyl_Hydrlase_18"/>
</dbReference>
<dbReference type="PANTHER" id="PTHR11177">
    <property type="entry name" value="CHITINASE"/>
    <property type="match status" value="1"/>
</dbReference>
<dbReference type="PANTHER" id="PTHR11177:SF144">
    <property type="entry name" value="CHITINASE 5"/>
    <property type="match status" value="1"/>
</dbReference>
<dbReference type="Pfam" id="PF01607">
    <property type="entry name" value="CBM_14"/>
    <property type="match status" value="1"/>
</dbReference>
<dbReference type="Pfam" id="PF00704">
    <property type="entry name" value="Glyco_hydro_18"/>
    <property type="match status" value="1"/>
</dbReference>
<dbReference type="SMART" id="SM00494">
    <property type="entry name" value="ChtBD2"/>
    <property type="match status" value="1"/>
</dbReference>
<dbReference type="SMART" id="SM00636">
    <property type="entry name" value="Glyco_18"/>
    <property type="match status" value="1"/>
</dbReference>
<dbReference type="SUPFAM" id="SSF51445">
    <property type="entry name" value="(Trans)glycosidases"/>
    <property type="match status" value="1"/>
</dbReference>
<dbReference type="SUPFAM" id="SSF54556">
    <property type="entry name" value="Chitinase insertion domain"/>
    <property type="match status" value="1"/>
</dbReference>
<dbReference type="SUPFAM" id="SSF57625">
    <property type="entry name" value="Invertebrate chitin-binding proteins"/>
    <property type="match status" value="1"/>
</dbReference>
<dbReference type="PROSITE" id="PS50940">
    <property type="entry name" value="CHIT_BIND_II"/>
    <property type="match status" value="1"/>
</dbReference>
<dbReference type="PROSITE" id="PS01095">
    <property type="entry name" value="GH18_1"/>
    <property type="match status" value="1"/>
</dbReference>
<dbReference type="PROSITE" id="PS51910">
    <property type="entry name" value="GH18_2"/>
    <property type="match status" value="1"/>
</dbReference>
<evidence type="ECO:0000255" key="1"/>
<evidence type="ECO:0000255" key="2">
    <source>
        <dbReference type="PROSITE-ProRule" id="PRU00144"/>
    </source>
</evidence>
<evidence type="ECO:0000255" key="3">
    <source>
        <dbReference type="PROSITE-ProRule" id="PRU01258"/>
    </source>
</evidence>
<evidence type="ECO:0000256" key="4">
    <source>
        <dbReference type="SAM" id="MobiDB-lite"/>
    </source>
</evidence>
<evidence type="ECO:0000305" key="5"/>
<reference key="1">
    <citation type="journal article" date="1993" name="Insect Biochem. Mol. Biol.">
        <title>Sequence of a cDNA and expression of the gene encoding epidermal and gut chitinases of Manduca sexta.</title>
        <authorList>
            <person name="Kramer K.J."/>
            <person name="Corpuz L."/>
            <person name="Choi H.K."/>
            <person name="Muthukrishnan S."/>
        </authorList>
    </citation>
    <scope>NUCLEOTIDE SEQUENCE [MRNA]</scope>
</reference>
<reference key="2">
    <citation type="journal article" date="1997" name="Insect Biochem. Mol. Biol.">
        <title>Isolation and characterization of a genomic clone for the gene of an insect molting enzyme, chitinase.</title>
        <authorList>
            <person name="Choi H.K."/>
            <person name="Choi K.H."/>
            <person name="Kramer K.J."/>
            <person name="Muthukrishnan S."/>
        </authorList>
    </citation>
    <scope>NUCLEOTIDE SEQUENCE [GENOMIC DNA]</scope>
</reference>
<proteinExistence type="evidence at transcript level"/>
<sequence length="554" mass="62204">MRATLATLAVLALATAVQSDSRARIVCYFSNWAVYRPGVGRYGIEDIPVEKCTHIIYSFIGVTEGNSEVLIIDPELDVDKNGFRNFTSLRSSHPSVKFMVAVGGWAEGSSKYSHMVAQKSTRMSFIRSVVSFLKKYDFDGLDLDWEYPGAADRGGSFSDKDKFLYLVQELRRAFIRVGKGWELTAAVPLANFRLMEGYHVPELCQELDAIHVMSYDLRGNWAGFADVHSPLYKRPHDQWAYEKLNVNDGLHLWEEKGCPSNKLVVGIPFYGRSFTLSAGNNNYGLGTFINKEAGGGDPAPYTNATGFWAYYEICTEVDKDDSGWTKKWDEQGKCPYAYKGTQWVGYEDPRSVEIKMNWIKQKGYLGAMTWAIDMDDFQGLCGEKNPLIKILHKHMSSYTVPPPHTENTTPTPEWARPPSTPSDPSEGDPIPTTTTAKPASTTKTTVKTTTTTTAKPPQSVIDEENDINVRPEPKPEPQPEPEVEVPPTENEVDGSEICNSDQDYIPDKKHCDKYWRCVNGEAMQFSCQHGTVFNVELNVCDWPSNATRRECQQP</sequence>
<feature type="signal peptide" evidence="1">
    <location>
        <begin position="1"/>
        <end position="19"/>
    </location>
</feature>
<feature type="chain" id="PRO_0000011949" description="Endochitinase">
    <location>
        <begin position="20"/>
        <end position="554"/>
    </location>
</feature>
<feature type="domain" description="GH18" evidence="3">
    <location>
        <begin position="23"/>
        <end position="398"/>
    </location>
</feature>
<feature type="domain" description="Chitin-binding type-2" evidence="2">
    <location>
        <begin position="495"/>
        <end position="553"/>
    </location>
</feature>
<feature type="region of interest" description="Disordered" evidence="4">
    <location>
        <begin position="398"/>
        <end position="494"/>
    </location>
</feature>
<feature type="compositionally biased region" description="Low complexity" evidence="4">
    <location>
        <begin position="431"/>
        <end position="457"/>
    </location>
</feature>
<feature type="compositionally biased region" description="Basic and acidic residues" evidence="4">
    <location>
        <begin position="467"/>
        <end position="477"/>
    </location>
</feature>
<feature type="active site" description="Proton donor" evidence="3">
    <location>
        <position position="146"/>
    </location>
</feature>
<feature type="binding site" evidence="3">
    <location>
        <begin position="76"/>
        <end position="77"/>
    </location>
    <ligand>
        <name>chitin</name>
        <dbReference type="ChEBI" id="CHEBI:17029"/>
    </ligand>
</feature>
<feature type="binding site" evidence="3">
    <location>
        <begin position="103"/>
        <end position="106"/>
    </location>
    <ligand>
        <name>chitin</name>
        <dbReference type="ChEBI" id="CHEBI:17029"/>
    </ligand>
</feature>
<feature type="binding site" evidence="3">
    <location>
        <position position="147"/>
    </location>
    <ligand>
        <name>chitin</name>
        <dbReference type="ChEBI" id="CHEBI:17029"/>
    </ligand>
</feature>
<feature type="binding site" evidence="3">
    <location>
        <begin position="213"/>
        <end position="216"/>
    </location>
    <ligand>
        <name>chitin</name>
        <dbReference type="ChEBI" id="CHEBI:17029"/>
    </ligand>
</feature>
<feature type="binding site" evidence="3">
    <location>
        <position position="370"/>
    </location>
    <ligand>
        <name>chitin</name>
        <dbReference type="ChEBI" id="CHEBI:17029"/>
    </ligand>
</feature>
<feature type="glycosylation site" description="N-linked (GlcNAc...) asparagine" evidence="1">
    <location>
        <position position="85"/>
    </location>
</feature>
<feature type="glycosylation site" description="N-linked (GlcNAc...) asparagine" evidence="1">
    <location>
        <position position="303"/>
    </location>
</feature>
<feature type="glycosylation site" description="N-linked (GlcNAc...) asparagine" evidence="1">
    <location>
        <position position="545"/>
    </location>
</feature>
<feature type="disulfide bond" evidence="3">
    <location>
        <begin position="27"/>
        <end position="52"/>
    </location>
</feature>
<feature type="disulfide bond" evidence="2">
    <location>
        <begin position="527"/>
        <end position="540"/>
    </location>
</feature>
<accession>P36362</accession>
<protein>
    <recommendedName>
        <fullName>Endochitinase</fullName>
        <ecNumber>3.2.1.14</ecNumber>
    </recommendedName>
</protein>
<comment type="function">
    <text>Digests chitin in the exoskeleton during the molting process.</text>
</comment>
<comment type="catalytic activity">
    <reaction>
        <text>Random endo-hydrolysis of N-acetyl-beta-D-glucosaminide (1-&gt;4)-beta-linkages in chitin and chitodextrins.</text>
        <dbReference type="EC" id="3.2.1.14"/>
    </reaction>
</comment>
<comment type="subcellular location">
    <subcellularLocation>
        <location>Secreted</location>
    </subcellularLocation>
</comment>
<comment type="tissue specificity">
    <text>Epidermis and gut.</text>
</comment>
<comment type="developmental stage">
    <text>High levels seen in the epidermis on day 0, but rapidly disappears and is undetected on days 1-4 of fifth instar. It reappears on day 5 and peaks on day 7 after which a rapid decline is seen. In the gut is detected on day 6 with lower levels seen on days 0, 7 and 8.</text>
</comment>
<comment type="similarity">
    <text evidence="5">Belongs to the glycosyl hydrolase 18 family. Chitinase class II subfamily.</text>
</comment>
<keyword id="KW-0119">Carbohydrate metabolism</keyword>
<keyword id="KW-0146">Chitin degradation</keyword>
<keyword id="KW-0147">Chitin-binding</keyword>
<keyword id="KW-1015">Disulfide bond</keyword>
<keyword id="KW-0325">Glycoprotein</keyword>
<keyword id="KW-0326">Glycosidase</keyword>
<keyword id="KW-0378">Hydrolase</keyword>
<keyword id="KW-0624">Polysaccharide degradation</keyword>
<keyword id="KW-0964">Secreted</keyword>
<keyword id="KW-0732">Signal</keyword>
<organism>
    <name type="scientific">Manduca sexta</name>
    <name type="common">Tobacco hawkmoth</name>
    <name type="synonym">Tobacco hornworm</name>
    <dbReference type="NCBI Taxonomy" id="7130"/>
    <lineage>
        <taxon>Eukaryota</taxon>
        <taxon>Metazoa</taxon>
        <taxon>Ecdysozoa</taxon>
        <taxon>Arthropoda</taxon>
        <taxon>Hexapoda</taxon>
        <taxon>Insecta</taxon>
        <taxon>Pterygota</taxon>
        <taxon>Neoptera</taxon>
        <taxon>Endopterygota</taxon>
        <taxon>Lepidoptera</taxon>
        <taxon>Glossata</taxon>
        <taxon>Ditrysia</taxon>
        <taxon>Bombycoidea</taxon>
        <taxon>Sphingidae</taxon>
        <taxon>Sphinginae</taxon>
        <taxon>Sphingini</taxon>
        <taxon>Manduca</taxon>
    </lineage>
</organism>
<name>CHIT_MANSE</name>